<protein>
    <recommendedName>
        <fullName evidence="1">Lipoyl synthase</fullName>
        <ecNumber evidence="1">2.8.1.8</ecNumber>
    </recommendedName>
    <alternativeName>
        <fullName evidence="1">Lip-syn</fullName>
        <shortName evidence="1">LS</shortName>
    </alternativeName>
    <alternativeName>
        <fullName evidence="1">Lipoate synthase</fullName>
    </alternativeName>
    <alternativeName>
        <fullName evidence="1">Lipoic acid synthase</fullName>
    </alternativeName>
    <alternativeName>
        <fullName evidence="1">Sulfur insertion protein LipA</fullName>
    </alternativeName>
</protein>
<organism>
    <name type="scientific">Burkholderia pseudomallei (strain 1106a)</name>
    <dbReference type="NCBI Taxonomy" id="357348"/>
    <lineage>
        <taxon>Bacteria</taxon>
        <taxon>Pseudomonadati</taxon>
        <taxon>Pseudomonadota</taxon>
        <taxon>Betaproteobacteria</taxon>
        <taxon>Burkholderiales</taxon>
        <taxon>Burkholderiaceae</taxon>
        <taxon>Burkholderia</taxon>
        <taxon>pseudomallei group</taxon>
    </lineage>
</organism>
<gene>
    <name evidence="1" type="primary">lipA</name>
    <name type="ordered locus">BURPS1106A_0464</name>
</gene>
<keyword id="KW-0004">4Fe-4S</keyword>
<keyword id="KW-0963">Cytoplasm</keyword>
<keyword id="KW-0408">Iron</keyword>
<keyword id="KW-0411">Iron-sulfur</keyword>
<keyword id="KW-0479">Metal-binding</keyword>
<keyword id="KW-0949">S-adenosyl-L-methionine</keyword>
<keyword id="KW-0808">Transferase</keyword>
<feature type="chain" id="PRO_1000012201" description="Lipoyl synthase">
    <location>
        <begin position="1"/>
        <end position="329"/>
    </location>
</feature>
<feature type="domain" description="Radical SAM core" evidence="2">
    <location>
        <begin position="87"/>
        <end position="305"/>
    </location>
</feature>
<feature type="region of interest" description="Disordered" evidence="3">
    <location>
        <begin position="1"/>
        <end position="23"/>
    </location>
</feature>
<feature type="binding site" evidence="1">
    <location>
        <position position="76"/>
    </location>
    <ligand>
        <name>[4Fe-4S] cluster</name>
        <dbReference type="ChEBI" id="CHEBI:49883"/>
        <label>1</label>
    </ligand>
</feature>
<feature type="binding site" evidence="1">
    <location>
        <position position="81"/>
    </location>
    <ligand>
        <name>[4Fe-4S] cluster</name>
        <dbReference type="ChEBI" id="CHEBI:49883"/>
        <label>1</label>
    </ligand>
</feature>
<feature type="binding site" evidence="1">
    <location>
        <position position="87"/>
    </location>
    <ligand>
        <name>[4Fe-4S] cluster</name>
        <dbReference type="ChEBI" id="CHEBI:49883"/>
        <label>1</label>
    </ligand>
</feature>
<feature type="binding site" evidence="1">
    <location>
        <position position="102"/>
    </location>
    <ligand>
        <name>[4Fe-4S] cluster</name>
        <dbReference type="ChEBI" id="CHEBI:49883"/>
        <label>2</label>
        <note>4Fe-4S-S-AdoMet</note>
    </ligand>
</feature>
<feature type="binding site" evidence="1">
    <location>
        <position position="106"/>
    </location>
    <ligand>
        <name>[4Fe-4S] cluster</name>
        <dbReference type="ChEBI" id="CHEBI:49883"/>
        <label>2</label>
        <note>4Fe-4S-S-AdoMet</note>
    </ligand>
</feature>
<feature type="binding site" evidence="1">
    <location>
        <position position="109"/>
    </location>
    <ligand>
        <name>[4Fe-4S] cluster</name>
        <dbReference type="ChEBI" id="CHEBI:49883"/>
        <label>2</label>
        <note>4Fe-4S-S-AdoMet</note>
    </ligand>
</feature>
<feature type="binding site" evidence="1">
    <location>
        <position position="316"/>
    </location>
    <ligand>
        <name>[4Fe-4S] cluster</name>
        <dbReference type="ChEBI" id="CHEBI:49883"/>
        <label>1</label>
    </ligand>
</feature>
<sequence length="329" mass="36429">MTDLTATPAPAEPAASAYDPTAKQKAQAKTARIPIKIVPIEKLKKPEWIRVKAATGSSRFNEIKTILREHNLHTVCEEASCPNIGECFGKGTATFMIMGDKCTRRCPFCDVGHGRPDPLDADEPKNLARTIAALKLKYVVITSVDRDDLRDGGAGHFVECIREVREQSPATRIEILTPDFRGRLDRALAILNAAPPDVMNHNLETVPRLYKEARPGSDYAHSLKLLKDFKALHPDVATKSGLMVGLGETTDEILQVMRDLRAHDVDMLTIGQYLQPSEHHLPVREYVHPDTFKMYEEEAYKMGFTHAAVGAMVRSSYHADLQAHGAGVV</sequence>
<comment type="function">
    <text evidence="1">Catalyzes the radical-mediated insertion of two sulfur atoms into the C-6 and C-8 positions of the octanoyl moiety bound to the lipoyl domains of lipoate-dependent enzymes, thereby converting the octanoylated domains into lipoylated derivatives.</text>
</comment>
<comment type="catalytic activity">
    <reaction evidence="1">
        <text>[[Fe-S] cluster scaffold protein carrying a second [4Fe-4S](2+) cluster] + N(6)-octanoyl-L-lysyl-[protein] + 2 oxidized [2Fe-2S]-[ferredoxin] + 2 S-adenosyl-L-methionine + 4 H(+) = [[Fe-S] cluster scaffold protein] + N(6)-[(R)-dihydrolipoyl]-L-lysyl-[protein] + 4 Fe(3+) + 2 hydrogen sulfide + 2 5'-deoxyadenosine + 2 L-methionine + 2 reduced [2Fe-2S]-[ferredoxin]</text>
        <dbReference type="Rhea" id="RHEA:16585"/>
        <dbReference type="Rhea" id="RHEA-COMP:9928"/>
        <dbReference type="Rhea" id="RHEA-COMP:10000"/>
        <dbReference type="Rhea" id="RHEA-COMP:10001"/>
        <dbReference type="Rhea" id="RHEA-COMP:10475"/>
        <dbReference type="Rhea" id="RHEA-COMP:14568"/>
        <dbReference type="Rhea" id="RHEA-COMP:14569"/>
        <dbReference type="ChEBI" id="CHEBI:15378"/>
        <dbReference type="ChEBI" id="CHEBI:17319"/>
        <dbReference type="ChEBI" id="CHEBI:29034"/>
        <dbReference type="ChEBI" id="CHEBI:29919"/>
        <dbReference type="ChEBI" id="CHEBI:33722"/>
        <dbReference type="ChEBI" id="CHEBI:33737"/>
        <dbReference type="ChEBI" id="CHEBI:33738"/>
        <dbReference type="ChEBI" id="CHEBI:57844"/>
        <dbReference type="ChEBI" id="CHEBI:59789"/>
        <dbReference type="ChEBI" id="CHEBI:78809"/>
        <dbReference type="ChEBI" id="CHEBI:83100"/>
        <dbReference type="EC" id="2.8.1.8"/>
    </reaction>
</comment>
<comment type="cofactor">
    <cofactor evidence="1">
        <name>[4Fe-4S] cluster</name>
        <dbReference type="ChEBI" id="CHEBI:49883"/>
    </cofactor>
    <text evidence="1">Binds 2 [4Fe-4S] clusters per subunit. One cluster is coordinated with 3 cysteines and an exchangeable S-adenosyl-L-methionine.</text>
</comment>
<comment type="pathway">
    <text evidence="1">Protein modification; protein lipoylation via endogenous pathway; protein N(6)-(lipoyl)lysine from octanoyl-[acyl-carrier-protein]: step 2/2.</text>
</comment>
<comment type="subcellular location">
    <subcellularLocation>
        <location evidence="1">Cytoplasm</location>
    </subcellularLocation>
</comment>
<comment type="similarity">
    <text evidence="1">Belongs to the radical SAM superfamily. Lipoyl synthase family.</text>
</comment>
<proteinExistence type="inferred from homology"/>
<evidence type="ECO:0000255" key="1">
    <source>
        <dbReference type="HAMAP-Rule" id="MF_00206"/>
    </source>
</evidence>
<evidence type="ECO:0000255" key="2">
    <source>
        <dbReference type="PROSITE-ProRule" id="PRU01266"/>
    </source>
</evidence>
<evidence type="ECO:0000256" key="3">
    <source>
        <dbReference type="SAM" id="MobiDB-lite"/>
    </source>
</evidence>
<name>LIPA_BURP0</name>
<accession>A3NQX6</accession>
<reference key="1">
    <citation type="journal article" date="2010" name="Genome Biol. Evol.">
        <title>Continuing evolution of Burkholderia mallei through genome reduction and large-scale rearrangements.</title>
        <authorList>
            <person name="Losada L."/>
            <person name="Ronning C.M."/>
            <person name="DeShazer D."/>
            <person name="Woods D."/>
            <person name="Fedorova N."/>
            <person name="Kim H.S."/>
            <person name="Shabalina S.A."/>
            <person name="Pearson T.R."/>
            <person name="Brinkac L."/>
            <person name="Tan P."/>
            <person name="Nandi T."/>
            <person name="Crabtree J."/>
            <person name="Badger J."/>
            <person name="Beckstrom-Sternberg S."/>
            <person name="Saqib M."/>
            <person name="Schutzer S.E."/>
            <person name="Keim P."/>
            <person name="Nierman W.C."/>
        </authorList>
    </citation>
    <scope>NUCLEOTIDE SEQUENCE [LARGE SCALE GENOMIC DNA]</scope>
    <source>
        <strain>1106a</strain>
    </source>
</reference>
<dbReference type="EC" id="2.8.1.8" evidence="1"/>
<dbReference type="EMBL" id="CP000572">
    <property type="protein sequence ID" value="ABN90351.1"/>
    <property type="molecule type" value="Genomic_DNA"/>
</dbReference>
<dbReference type="RefSeq" id="WP_004522930.1">
    <property type="nucleotide sequence ID" value="NC_009076.1"/>
</dbReference>
<dbReference type="SMR" id="A3NQX6"/>
<dbReference type="GeneID" id="93058932"/>
<dbReference type="KEGG" id="bpl:BURPS1106A_0464"/>
<dbReference type="HOGENOM" id="CLU_033144_2_1_4"/>
<dbReference type="UniPathway" id="UPA00538">
    <property type="reaction ID" value="UER00593"/>
</dbReference>
<dbReference type="Proteomes" id="UP000006738">
    <property type="component" value="Chromosome I"/>
</dbReference>
<dbReference type="GO" id="GO:0005737">
    <property type="term" value="C:cytoplasm"/>
    <property type="evidence" value="ECO:0007669"/>
    <property type="project" value="UniProtKB-SubCell"/>
</dbReference>
<dbReference type="GO" id="GO:0051539">
    <property type="term" value="F:4 iron, 4 sulfur cluster binding"/>
    <property type="evidence" value="ECO:0007669"/>
    <property type="project" value="UniProtKB-UniRule"/>
</dbReference>
<dbReference type="GO" id="GO:0016992">
    <property type="term" value="F:lipoate synthase activity"/>
    <property type="evidence" value="ECO:0007669"/>
    <property type="project" value="UniProtKB-UniRule"/>
</dbReference>
<dbReference type="GO" id="GO:0046872">
    <property type="term" value="F:metal ion binding"/>
    <property type="evidence" value="ECO:0007669"/>
    <property type="project" value="UniProtKB-KW"/>
</dbReference>
<dbReference type="CDD" id="cd01335">
    <property type="entry name" value="Radical_SAM"/>
    <property type="match status" value="1"/>
</dbReference>
<dbReference type="FunFam" id="3.20.20.70:FF:000040">
    <property type="entry name" value="Lipoyl synthase"/>
    <property type="match status" value="1"/>
</dbReference>
<dbReference type="Gene3D" id="3.20.20.70">
    <property type="entry name" value="Aldolase class I"/>
    <property type="match status" value="1"/>
</dbReference>
<dbReference type="HAMAP" id="MF_00206">
    <property type="entry name" value="Lipoyl_synth"/>
    <property type="match status" value="1"/>
</dbReference>
<dbReference type="InterPro" id="IPR013785">
    <property type="entry name" value="Aldolase_TIM"/>
</dbReference>
<dbReference type="InterPro" id="IPR006638">
    <property type="entry name" value="Elp3/MiaA/NifB-like_rSAM"/>
</dbReference>
<dbReference type="InterPro" id="IPR031691">
    <property type="entry name" value="LIAS_N"/>
</dbReference>
<dbReference type="InterPro" id="IPR003698">
    <property type="entry name" value="Lipoyl_synth"/>
</dbReference>
<dbReference type="InterPro" id="IPR007197">
    <property type="entry name" value="rSAM"/>
</dbReference>
<dbReference type="NCBIfam" id="TIGR00510">
    <property type="entry name" value="lipA"/>
    <property type="match status" value="1"/>
</dbReference>
<dbReference type="NCBIfam" id="NF004019">
    <property type="entry name" value="PRK05481.1"/>
    <property type="match status" value="1"/>
</dbReference>
<dbReference type="NCBIfam" id="NF009544">
    <property type="entry name" value="PRK12928.1"/>
    <property type="match status" value="1"/>
</dbReference>
<dbReference type="PANTHER" id="PTHR10949">
    <property type="entry name" value="LIPOYL SYNTHASE"/>
    <property type="match status" value="1"/>
</dbReference>
<dbReference type="PANTHER" id="PTHR10949:SF0">
    <property type="entry name" value="LIPOYL SYNTHASE, MITOCHONDRIAL"/>
    <property type="match status" value="1"/>
</dbReference>
<dbReference type="Pfam" id="PF16881">
    <property type="entry name" value="LIAS_N"/>
    <property type="match status" value="1"/>
</dbReference>
<dbReference type="Pfam" id="PF04055">
    <property type="entry name" value="Radical_SAM"/>
    <property type="match status" value="1"/>
</dbReference>
<dbReference type="PIRSF" id="PIRSF005963">
    <property type="entry name" value="Lipoyl_synth"/>
    <property type="match status" value="1"/>
</dbReference>
<dbReference type="SFLD" id="SFLDF00271">
    <property type="entry name" value="lipoyl_synthase"/>
    <property type="match status" value="1"/>
</dbReference>
<dbReference type="SFLD" id="SFLDS00029">
    <property type="entry name" value="Radical_SAM"/>
    <property type="match status" value="1"/>
</dbReference>
<dbReference type="SMART" id="SM00729">
    <property type="entry name" value="Elp3"/>
    <property type="match status" value="1"/>
</dbReference>
<dbReference type="SUPFAM" id="SSF102114">
    <property type="entry name" value="Radical SAM enzymes"/>
    <property type="match status" value="1"/>
</dbReference>
<dbReference type="PROSITE" id="PS51918">
    <property type="entry name" value="RADICAL_SAM"/>
    <property type="match status" value="1"/>
</dbReference>